<feature type="chain" id="PRO_1000003825" description="Nucleoid-associated protein YbaB">
    <location>
        <begin position="1"/>
        <end position="109"/>
    </location>
</feature>
<gene>
    <name evidence="1" type="primary">ybaB</name>
    <name type="ordered locus">SBO_0371</name>
</gene>
<dbReference type="EMBL" id="CP000036">
    <property type="protein sequence ID" value="ABB65083.1"/>
    <property type="molecule type" value="Genomic_DNA"/>
</dbReference>
<dbReference type="RefSeq" id="WP_000467098.1">
    <property type="nucleotide sequence ID" value="NC_007613.1"/>
</dbReference>
<dbReference type="SMR" id="Q325C5"/>
<dbReference type="KEGG" id="sbo:SBO_0371"/>
<dbReference type="HOGENOM" id="CLU_140930_0_0_6"/>
<dbReference type="Proteomes" id="UP000007067">
    <property type="component" value="Chromosome"/>
</dbReference>
<dbReference type="GO" id="GO:0043590">
    <property type="term" value="C:bacterial nucleoid"/>
    <property type="evidence" value="ECO:0007669"/>
    <property type="project" value="UniProtKB-UniRule"/>
</dbReference>
<dbReference type="GO" id="GO:0005829">
    <property type="term" value="C:cytosol"/>
    <property type="evidence" value="ECO:0007669"/>
    <property type="project" value="TreeGrafter"/>
</dbReference>
<dbReference type="GO" id="GO:0003677">
    <property type="term" value="F:DNA binding"/>
    <property type="evidence" value="ECO:0007669"/>
    <property type="project" value="UniProtKB-UniRule"/>
</dbReference>
<dbReference type="FunFam" id="3.30.1310.10:FF:000001">
    <property type="entry name" value="Nucleoid-associated protein YbaB"/>
    <property type="match status" value="1"/>
</dbReference>
<dbReference type="Gene3D" id="3.30.1310.10">
    <property type="entry name" value="Nucleoid-associated protein YbaB-like domain"/>
    <property type="match status" value="1"/>
</dbReference>
<dbReference type="HAMAP" id="MF_00274">
    <property type="entry name" value="DNA_YbaB_EbfC"/>
    <property type="match status" value="1"/>
</dbReference>
<dbReference type="InterPro" id="IPR036894">
    <property type="entry name" value="YbaB-like_sf"/>
</dbReference>
<dbReference type="InterPro" id="IPR004401">
    <property type="entry name" value="YbaB/EbfC"/>
</dbReference>
<dbReference type="NCBIfam" id="TIGR00103">
    <property type="entry name" value="DNA_YbaB_EbfC"/>
    <property type="match status" value="1"/>
</dbReference>
<dbReference type="PANTHER" id="PTHR33449">
    <property type="entry name" value="NUCLEOID-ASSOCIATED PROTEIN YBAB"/>
    <property type="match status" value="1"/>
</dbReference>
<dbReference type="PANTHER" id="PTHR33449:SF1">
    <property type="entry name" value="NUCLEOID-ASSOCIATED PROTEIN YBAB"/>
    <property type="match status" value="1"/>
</dbReference>
<dbReference type="Pfam" id="PF02575">
    <property type="entry name" value="YbaB_DNA_bd"/>
    <property type="match status" value="1"/>
</dbReference>
<dbReference type="PIRSF" id="PIRSF004555">
    <property type="entry name" value="UCP004555"/>
    <property type="match status" value="1"/>
</dbReference>
<dbReference type="SUPFAM" id="SSF82607">
    <property type="entry name" value="YbaB-like"/>
    <property type="match status" value="1"/>
</dbReference>
<sequence>MFGKGGLGNLMKQAQQMQEKMQKMQEEIAQLEVTGESGAGLVKVTINGAHNCRRVEIDPSLLEDDKEMLEDLVAAAFNDAARRIEETQKEKMASVSSGMQLPPGFKMPF</sequence>
<keyword id="KW-0963">Cytoplasm</keyword>
<keyword id="KW-0238">DNA-binding</keyword>
<proteinExistence type="inferred from homology"/>
<comment type="function">
    <text evidence="1">Binds to DNA and alters its conformation. May be involved in regulation of gene expression, nucleoid organization and DNA protection.</text>
</comment>
<comment type="subunit">
    <text evidence="1">Homodimer.</text>
</comment>
<comment type="subcellular location">
    <subcellularLocation>
        <location evidence="1">Cytoplasm</location>
        <location evidence="1">Nucleoid</location>
    </subcellularLocation>
</comment>
<comment type="similarity">
    <text evidence="1">Belongs to the YbaB/EbfC family.</text>
</comment>
<protein>
    <recommendedName>
        <fullName evidence="1">Nucleoid-associated protein YbaB</fullName>
    </recommendedName>
</protein>
<accession>Q325C5</accession>
<organism>
    <name type="scientific">Shigella boydii serotype 4 (strain Sb227)</name>
    <dbReference type="NCBI Taxonomy" id="300268"/>
    <lineage>
        <taxon>Bacteria</taxon>
        <taxon>Pseudomonadati</taxon>
        <taxon>Pseudomonadota</taxon>
        <taxon>Gammaproteobacteria</taxon>
        <taxon>Enterobacterales</taxon>
        <taxon>Enterobacteriaceae</taxon>
        <taxon>Shigella</taxon>
    </lineage>
</organism>
<evidence type="ECO:0000255" key="1">
    <source>
        <dbReference type="HAMAP-Rule" id="MF_00274"/>
    </source>
</evidence>
<reference key="1">
    <citation type="journal article" date="2005" name="Nucleic Acids Res.">
        <title>Genome dynamics and diversity of Shigella species, the etiologic agents of bacillary dysentery.</title>
        <authorList>
            <person name="Yang F."/>
            <person name="Yang J."/>
            <person name="Zhang X."/>
            <person name="Chen L."/>
            <person name="Jiang Y."/>
            <person name="Yan Y."/>
            <person name="Tang X."/>
            <person name="Wang J."/>
            <person name="Xiong Z."/>
            <person name="Dong J."/>
            <person name="Xue Y."/>
            <person name="Zhu Y."/>
            <person name="Xu X."/>
            <person name="Sun L."/>
            <person name="Chen S."/>
            <person name="Nie H."/>
            <person name="Peng J."/>
            <person name="Xu J."/>
            <person name="Wang Y."/>
            <person name="Yuan Z."/>
            <person name="Wen Y."/>
            <person name="Yao Z."/>
            <person name="Shen Y."/>
            <person name="Qiang B."/>
            <person name="Hou Y."/>
            <person name="Yu J."/>
            <person name="Jin Q."/>
        </authorList>
    </citation>
    <scope>NUCLEOTIDE SEQUENCE [LARGE SCALE GENOMIC DNA]</scope>
    <source>
        <strain>Sb227</strain>
    </source>
</reference>
<name>YBAB_SHIBS</name>